<organism>
    <name type="scientific">Synechococcus sp. (strain ATCC 27144 / PCC 6301 / SAUG 1402/1)</name>
    <name type="common">Anacystis nidulans</name>
    <dbReference type="NCBI Taxonomy" id="269084"/>
    <lineage>
        <taxon>Bacteria</taxon>
        <taxon>Bacillati</taxon>
        <taxon>Cyanobacteriota</taxon>
        <taxon>Cyanophyceae</taxon>
        <taxon>Synechococcales</taxon>
        <taxon>Synechococcaceae</taxon>
        <taxon>Synechococcus</taxon>
    </lineage>
</organism>
<reference key="1">
    <citation type="journal article" date="2007" name="Photosyn. Res.">
        <title>Complete nucleotide sequence of the freshwater unicellular cyanobacterium Synechococcus elongatus PCC 6301 chromosome: gene content and organization.</title>
        <authorList>
            <person name="Sugita C."/>
            <person name="Ogata K."/>
            <person name="Shikata M."/>
            <person name="Jikuya H."/>
            <person name="Takano J."/>
            <person name="Furumichi M."/>
            <person name="Kanehisa M."/>
            <person name="Omata T."/>
            <person name="Sugiura M."/>
            <person name="Sugita M."/>
        </authorList>
    </citation>
    <scope>NUCLEOTIDE SEQUENCE [LARGE SCALE GENOMIC DNA]</scope>
    <source>
        <strain>ATCC 27144 / PCC 6301 / SAUG 1402/1</strain>
    </source>
</reference>
<proteinExistence type="inferred from homology"/>
<protein>
    <recommendedName>
        <fullName evidence="1">Phosphoglucosamine mutase</fullName>
        <ecNumber evidence="1">5.4.2.10</ecNumber>
    </recommendedName>
</protein>
<dbReference type="EC" id="5.4.2.10" evidence="1"/>
<dbReference type="EMBL" id="AP008231">
    <property type="protein sequence ID" value="BAD80150.1"/>
    <property type="molecule type" value="Genomic_DNA"/>
</dbReference>
<dbReference type="SMR" id="Q5N0M0"/>
<dbReference type="KEGG" id="syc:syc1960_c"/>
<dbReference type="eggNOG" id="COG1109">
    <property type="taxonomic scope" value="Bacteria"/>
</dbReference>
<dbReference type="Proteomes" id="UP000001175">
    <property type="component" value="Chromosome"/>
</dbReference>
<dbReference type="GO" id="GO:0005829">
    <property type="term" value="C:cytosol"/>
    <property type="evidence" value="ECO:0007669"/>
    <property type="project" value="TreeGrafter"/>
</dbReference>
<dbReference type="GO" id="GO:0000287">
    <property type="term" value="F:magnesium ion binding"/>
    <property type="evidence" value="ECO:0007669"/>
    <property type="project" value="UniProtKB-UniRule"/>
</dbReference>
<dbReference type="GO" id="GO:0008966">
    <property type="term" value="F:phosphoglucosamine mutase activity"/>
    <property type="evidence" value="ECO:0007669"/>
    <property type="project" value="UniProtKB-UniRule"/>
</dbReference>
<dbReference type="GO" id="GO:0004615">
    <property type="term" value="F:phosphomannomutase activity"/>
    <property type="evidence" value="ECO:0007669"/>
    <property type="project" value="TreeGrafter"/>
</dbReference>
<dbReference type="GO" id="GO:0005975">
    <property type="term" value="P:carbohydrate metabolic process"/>
    <property type="evidence" value="ECO:0007669"/>
    <property type="project" value="InterPro"/>
</dbReference>
<dbReference type="GO" id="GO:0009252">
    <property type="term" value="P:peptidoglycan biosynthetic process"/>
    <property type="evidence" value="ECO:0007669"/>
    <property type="project" value="TreeGrafter"/>
</dbReference>
<dbReference type="GO" id="GO:0006048">
    <property type="term" value="P:UDP-N-acetylglucosamine biosynthetic process"/>
    <property type="evidence" value="ECO:0007669"/>
    <property type="project" value="TreeGrafter"/>
</dbReference>
<dbReference type="CDD" id="cd05802">
    <property type="entry name" value="GlmM"/>
    <property type="match status" value="1"/>
</dbReference>
<dbReference type="FunFam" id="3.30.310.50:FF:000001">
    <property type="entry name" value="Phosphoglucosamine mutase"/>
    <property type="match status" value="1"/>
</dbReference>
<dbReference type="FunFam" id="3.40.120.10:FF:000001">
    <property type="entry name" value="Phosphoglucosamine mutase"/>
    <property type="match status" value="1"/>
</dbReference>
<dbReference type="FunFam" id="3.40.120.10:FF:000002">
    <property type="entry name" value="Phosphoglucosamine mutase"/>
    <property type="match status" value="1"/>
</dbReference>
<dbReference type="Gene3D" id="3.40.120.10">
    <property type="entry name" value="Alpha-D-Glucose-1,6-Bisphosphate, subunit A, domain 3"/>
    <property type="match status" value="3"/>
</dbReference>
<dbReference type="Gene3D" id="3.30.310.50">
    <property type="entry name" value="Alpha-D-phosphohexomutase, C-terminal domain"/>
    <property type="match status" value="1"/>
</dbReference>
<dbReference type="HAMAP" id="MF_01554_B">
    <property type="entry name" value="GlmM_B"/>
    <property type="match status" value="1"/>
</dbReference>
<dbReference type="InterPro" id="IPR005844">
    <property type="entry name" value="A-D-PHexomutase_a/b/a-I"/>
</dbReference>
<dbReference type="InterPro" id="IPR016055">
    <property type="entry name" value="A-D-PHexomutase_a/b/a-I/II/III"/>
</dbReference>
<dbReference type="InterPro" id="IPR005845">
    <property type="entry name" value="A-D-PHexomutase_a/b/a-II"/>
</dbReference>
<dbReference type="InterPro" id="IPR005846">
    <property type="entry name" value="A-D-PHexomutase_a/b/a-III"/>
</dbReference>
<dbReference type="InterPro" id="IPR005843">
    <property type="entry name" value="A-D-PHexomutase_C"/>
</dbReference>
<dbReference type="InterPro" id="IPR036900">
    <property type="entry name" value="A-D-PHexomutase_C_sf"/>
</dbReference>
<dbReference type="InterPro" id="IPR016066">
    <property type="entry name" value="A-D-PHexomutase_CS"/>
</dbReference>
<dbReference type="InterPro" id="IPR005841">
    <property type="entry name" value="Alpha-D-phosphohexomutase_SF"/>
</dbReference>
<dbReference type="InterPro" id="IPR006352">
    <property type="entry name" value="GlmM_bact"/>
</dbReference>
<dbReference type="InterPro" id="IPR050060">
    <property type="entry name" value="Phosphoglucosamine_mutase"/>
</dbReference>
<dbReference type="NCBIfam" id="TIGR01455">
    <property type="entry name" value="glmM"/>
    <property type="match status" value="1"/>
</dbReference>
<dbReference type="PANTHER" id="PTHR42946:SF1">
    <property type="entry name" value="PHOSPHOGLUCOMUTASE (ALPHA-D-GLUCOSE-1,6-BISPHOSPHATE-DEPENDENT)"/>
    <property type="match status" value="1"/>
</dbReference>
<dbReference type="PANTHER" id="PTHR42946">
    <property type="entry name" value="PHOSPHOHEXOSE MUTASE"/>
    <property type="match status" value="1"/>
</dbReference>
<dbReference type="Pfam" id="PF02878">
    <property type="entry name" value="PGM_PMM_I"/>
    <property type="match status" value="1"/>
</dbReference>
<dbReference type="Pfam" id="PF02879">
    <property type="entry name" value="PGM_PMM_II"/>
    <property type="match status" value="1"/>
</dbReference>
<dbReference type="Pfam" id="PF02880">
    <property type="entry name" value="PGM_PMM_III"/>
    <property type="match status" value="1"/>
</dbReference>
<dbReference type="Pfam" id="PF00408">
    <property type="entry name" value="PGM_PMM_IV"/>
    <property type="match status" value="1"/>
</dbReference>
<dbReference type="PRINTS" id="PR00509">
    <property type="entry name" value="PGMPMM"/>
</dbReference>
<dbReference type="SUPFAM" id="SSF55957">
    <property type="entry name" value="Phosphoglucomutase, C-terminal domain"/>
    <property type="match status" value="1"/>
</dbReference>
<dbReference type="SUPFAM" id="SSF53738">
    <property type="entry name" value="Phosphoglucomutase, first 3 domains"/>
    <property type="match status" value="3"/>
</dbReference>
<dbReference type="PROSITE" id="PS00710">
    <property type="entry name" value="PGM_PMM"/>
    <property type="match status" value="1"/>
</dbReference>
<sequence>MCGMVSATRWETAIEVTPWIAAIAEQVPLFGTDGIRGRVGEHLTAPLAQQVGFWTGQVLRQAGGDRGPVVVGQDSRNSSNMLAMALSSGLAAAGVEVLHLGLCPTPGVAYLTHHSEAIGGVMISASHNPPGDNGIKVFGADGSKLDRQLQAAIEAGLRGQQTSLPATTWGQHYYQPQLADHYQAAIAQSLGQRANLQGLKIVLDLAWGAAALLAPRLFRELGAEVIALHDLPDGNQINVNCGSTHLARLQAAVLEQGADMGFAFDGDADRVLAVDGRGRSVDGDHILFLWGRELEQQQQLPGQAIVTTVMANLGFERAWQAVGGEFVRTAVGDQYVQAEMQARGAMLGGEQSGHILCRHYALTGDGTLTAAHVAALVQASGVSLADLVDQSFRPYPQLLRNVRVEDRDRRCNWQNCAALTQAIAAAETDMGDRGRVLVRASGTEPLLRIMVEAEEAQQVEHWTTHLVQVAESHLL</sequence>
<evidence type="ECO:0000255" key="1">
    <source>
        <dbReference type="HAMAP-Rule" id="MF_01554"/>
    </source>
</evidence>
<keyword id="KW-0413">Isomerase</keyword>
<keyword id="KW-0460">Magnesium</keyword>
<keyword id="KW-0479">Metal-binding</keyword>
<keyword id="KW-0597">Phosphoprotein</keyword>
<name>GLMM_SYNP6</name>
<accession>Q5N0M0</accession>
<comment type="function">
    <text evidence="1">Catalyzes the conversion of glucosamine-6-phosphate to glucosamine-1-phosphate.</text>
</comment>
<comment type="catalytic activity">
    <reaction evidence="1">
        <text>alpha-D-glucosamine 1-phosphate = D-glucosamine 6-phosphate</text>
        <dbReference type="Rhea" id="RHEA:23424"/>
        <dbReference type="ChEBI" id="CHEBI:58516"/>
        <dbReference type="ChEBI" id="CHEBI:58725"/>
        <dbReference type="EC" id="5.4.2.10"/>
    </reaction>
</comment>
<comment type="cofactor">
    <cofactor evidence="1">
        <name>Mg(2+)</name>
        <dbReference type="ChEBI" id="CHEBI:18420"/>
    </cofactor>
    <text evidence="1">Binds 1 Mg(2+) ion per subunit.</text>
</comment>
<comment type="PTM">
    <text evidence="1">Activated by phosphorylation.</text>
</comment>
<comment type="similarity">
    <text evidence="1">Belongs to the phosphohexose mutase family.</text>
</comment>
<gene>
    <name evidence="1" type="primary">glmM</name>
    <name type="ordered locus">syc1960_c</name>
</gene>
<feature type="chain" id="PRO_0000147986" description="Phosphoglucosamine mutase">
    <location>
        <begin position="1"/>
        <end position="475"/>
    </location>
</feature>
<feature type="active site" description="Phosphoserine intermediate" evidence="1">
    <location>
        <position position="126"/>
    </location>
</feature>
<feature type="binding site" description="via phosphate group" evidence="1">
    <location>
        <position position="126"/>
    </location>
    <ligand>
        <name>Mg(2+)</name>
        <dbReference type="ChEBI" id="CHEBI:18420"/>
    </ligand>
</feature>
<feature type="binding site" evidence="1">
    <location>
        <position position="265"/>
    </location>
    <ligand>
        <name>Mg(2+)</name>
        <dbReference type="ChEBI" id="CHEBI:18420"/>
    </ligand>
</feature>
<feature type="binding site" evidence="1">
    <location>
        <position position="267"/>
    </location>
    <ligand>
        <name>Mg(2+)</name>
        <dbReference type="ChEBI" id="CHEBI:18420"/>
    </ligand>
</feature>
<feature type="binding site" evidence="1">
    <location>
        <position position="269"/>
    </location>
    <ligand>
        <name>Mg(2+)</name>
        <dbReference type="ChEBI" id="CHEBI:18420"/>
    </ligand>
</feature>
<feature type="modified residue" description="Phosphoserine" evidence="1">
    <location>
        <position position="126"/>
    </location>
</feature>